<evidence type="ECO:0000255" key="1">
    <source>
        <dbReference type="HAMAP-Rule" id="MF_01304"/>
    </source>
</evidence>
<dbReference type="EMBL" id="AM933173">
    <property type="protein sequence ID" value="CAR36692.1"/>
    <property type="molecule type" value="Genomic_DNA"/>
</dbReference>
<dbReference type="SMR" id="B5R785"/>
<dbReference type="KEGG" id="seg:SG0797"/>
<dbReference type="HOGENOM" id="CLU_018816_6_3_6"/>
<dbReference type="Proteomes" id="UP000008321">
    <property type="component" value="Chromosome"/>
</dbReference>
<dbReference type="GO" id="GO:0042597">
    <property type="term" value="C:periplasmic space"/>
    <property type="evidence" value="ECO:0007669"/>
    <property type="project" value="UniProtKB-SubCell"/>
</dbReference>
<dbReference type="FunFam" id="1.10.287.470:FF:000004">
    <property type="entry name" value="UPF0194 membrane protein YbhG"/>
    <property type="match status" value="1"/>
</dbReference>
<dbReference type="FunFam" id="2.40.50.100:FF:000025">
    <property type="entry name" value="UPF0194 membrane protein YbhG"/>
    <property type="match status" value="1"/>
</dbReference>
<dbReference type="Gene3D" id="2.40.30.170">
    <property type="match status" value="1"/>
</dbReference>
<dbReference type="Gene3D" id="2.40.50.100">
    <property type="match status" value="2"/>
</dbReference>
<dbReference type="Gene3D" id="1.10.287.470">
    <property type="entry name" value="Helix hairpin bin"/>
    <property type="match status" value="2"/>
</dbReference>
<dbReference type="HAMAP" id="MF_01304">
    <property type="entry name" value="UPF0194"/>
    <property type="match status" value="1"/>
</dbReference>
<dbReference type="InterPro" id="IPR032317">
    <property type="entry name" value="CusB_D23"/>
</dbReference>
<dbReference type="InterPro" id="IPR022936">
    <property type="entry name" value="UPF0194_membrane_YbhG"/>
</dbReference>
<dbReference type="InterPro" id="IPR050465">
    <property type="entry name" value="UPF0194_transport"/>
</dbReference>
<dbReference type="NCBIfam" id="NF002939">
    <property type="entry name" value="PRK03598.1"/>
    <property type="match status" value="1"/>
</dbReference>
<dbReference type="PANTHER" id="PTHR32347">
    <property type="entry name" value="EFFLUX SYSTEM COMPONENT YKNX-RELATED"/>
    <property type="match status" value="1"/>
</dbReference>
<dbReference type="PANTHER" id="PTHR32347:SF29">
    <property type="entry name" value="UPF0194 MEMBRANE PROTEIN YBHG"/>
    <property type="match status" value="1"/>
</dbReference>
<dbReference type="Pfam" id="PF16576">
    <property type="entry name" value="HlyD_D23"/>
    <property type="match status" value="1"/>
</dbReference>
<dbReference type="SUPFAM" id="SSF111369">
    <property type="entry name" value="HlyD-like secretion proteins"/>
    <property type="match status" value="3"/>
</dbReference>
<proteinExistence type="inferred from homology"/>
<sequence>MKKPVVIGLAIAAIVAVIAGGTWWYQSRQDDGLTLYGNVDIRTVNISFRVGGRLASLNVDEGDTIKAGQVLGELDHAPYENALMQAKAGVSVAQAQYDLMLAGYRDEEIAQAAAAVRQAQAAYDYAQNFYNRQQGLWKSRTISANDLENARSSRDQAQATLKSAQDKLSQYRTGNREQDIAQAKASLEQAKAQLAQAQLDLQDTTLIAPANGTLLTRAVEPGSMLSAGSTVLTLSLTRPVWVRAYVDERNLSQTQPGRDILLYTDGRPDKPYHGKIGFVSPTAEFTPKTVETPDLRTDLVYRLRIIVTDADDALRQGMPVTVKFNYEARHE</sequence>
<reference key="1">
    <citation type="journal article" date="2008" name="Genome Res.">
        <title>Comparative genome analysis of Salmonella enteritidis PT4 and Salmonella gallinarum 287/91 provides insights into evolutionary and host adaptation pathways.</title>
        <authorList>
            <person name="Thomson N.R."/>
            <person name="Clayton D.J."/>
            <person name="Windhorst D."/>
            <person name="Vernikos G."/>
            <person name="Davidson S."/>
            <person name="Churcher C."/>
            <person name="Quail M.A."/>
            <person name="Stevens M."/>
            <person name="Jones M.A."/>
            <person name="Watson M."/>
            <person name="Barron A."/>
            <person name="Layton A."/>
            <person name="Pickard D."/>
            <person name="Kingsley R.A."/>
            <person name="Bignell A."/>
            <person name="Clark L."/>
            <person name="Harris B."/>
            <person name="Ormond D."/>
            <person name="Abdellah Z."/>
            <person name="Brooks K."/>
            <person name="Cherevach I."/>
            <person name="Chillingworth T."/>
            <person name="Woodward J."/>
            <person name="Norberczak H."/>
            <person name="Lord A."/>
            <person name="Arrowsmith C."/>
            <person name="Jagels K."/>
            <person name="Moule S."/>
            <person name="Mungall K."/>
            <person name="Saunders M."/>
            <person name="Whitehead S."/>
            <person name="Chabalgoity J.A."/>
            <person name="Maskell D."/>
            <person name="Humphreys T."/>
            <person name="Roberts M."/>
            <person name="Barrow P.A."/>
            <person name="Dougan G."/>
            <person name="Parkhill J."/>
        </authorList>
    </citation>
    <scope>NUCLEOTIDE SEQUENCE [LARGE SCALE GENOMIC DNA]</scope>
    <source>
        <strain>287/91 / NCTC 13346</strain>
    </source>
</reference>
<organism>
    <name type="scientific">Salmonella gallinarum (strain 287/91 / NCTC 13346)</name>
    <dbReference type="NCBI Taxonomy" id="550538"/>
    <lineage>
        <taxon>Bacteria</taxon>
        <taxon>Pseudomonadati</taxon>
        <taxon>Pseudomonadota</taxon>
        <taxon>Gammaproteobacteria</taxon>
        <taxon>Enterobacterales</taxon>
        <taxon>Enterobacteriaceae</taxon>
        <taxon>Salmonella</taxon>
    </lineage>
</organism>
<protein>
    <recommendedName>
        <fullName evidence="1">UPF0194 membrane protein YbhG</fullName>
    </recommendedName>
</protein>
<gene>
    <name evidence="1" type="primary">ybhG</name>
    <name type="ordered locus">SG0797</name>
</gene>
<comment type="subcellular location">
    <subcellularLocation>
        <location evidence="1">Periplasm</location>
    </subcellularLocation>
</comment>
<comment type="similarity">
    <text evidence="1">Belongs to the UPF0194 family.</text>
</comment>
<accession>B5R785</accession>
<keyword id="KW-0175">Coiled coil</keyword>
<keyword id="KW-0574">Periplasm</keyword>
<keyword id="KW-0732">Signal</keyword>
<name>YBHG_SALG2</name>
<feature type="signal peptide" evidence="1">
    <location>
        <begin position="1"/>
        <end position="19"/>
    </location>
</feature>
<feature type="chain" id="PRO_5000398060" description="UPF0194 membrane protein YbhG">
    <location>
        <begin position="20"/>
        <end position="331"/>
    </location>
</feature>
<feature type="coiled-coil region" evidence="1">
    <location>
        <begin position="107"/>
        <end position="208"/>
    </location>
</feature>